<comment type="function">
    <text evidence="1">Regulates cell growth, proliferation and survival via inhibition of the activity of the mammalian target of rapamycin complex 1 (mTORC1). Inhibition of mTORC1 is mediated by a pathway that involves ddit4/redd1, akt1, the tsc1-tsc2 complex and the GTPase rheb. Plays an important role in responses to cellular energy levels and cellular stress, including responses to hypoxia and DNA damage, via its effect on mTORC1 activity. Plays a role in neuronal differentiation, neuron migration during embryonic brain development and in neuronal cell death (By similarity).</text>
</comment>
<comment type="subcellular location">
    <subcellularLocation>
        <location evidence="1">Cytoplasm</location>
    </subcellularLocation>
    <subcellularLocation>
        <location evidence="1">Mitochondrion</location>
    </subcellularLocation>
</comment>
<comment type="similarity">
    <text evidence="2">Belongs to the DDIT4 family.</text>
</comment>
<evidence type="ECO:0000250" key="1"/>
<evidence type="ECO:0000305" key="2"/>
<feature type="chain" id="PRO_0000307201" description="DNA damage-inducible transcript 4 protein">
    <location>
        <begin position="1"/>
        <end position="219"/>
    </location>
</feature>
<name>DDIT4_XENLA</name>
<proteinExistence type="evidence at transcript level"/>
<organism>
    <name type="scientific">Xenopus laevis</name>
    <name type="common">African clawed frog</name>
    <dbReference type="NCBI Taxonomy" id="8355"/>
    <lineage>
        <taxon>Eukaryota</taxon>
        <taxon>Metazoa</taxon>
        <taxon>Chordata</taxon>
        <taxon>Craniata</taxon>
        <taxon>Vertebrata</taxon>
        <taxon>Euteleostomi</taxon>
        <taxon>Amphibia</taxon>
        <taxon>Batrachia</taxon>
        <taxon>Anura</taxon>
        <taxon>Pipoidea</taxon>
        <taxon>Pipidae</taxon>
        <taxon>Xenopodinae</taxon>
        <taxon>Xenopus</taxon>
        <taxon>Xenopus</taxon>
    </lineage>
</organism>
<sequence length="219" mass="24180">MPARWDAFSALSVPPPILEEESPSQFWGEDCANVAQRCSSLPSSDCESLTSSNSYSECDLDAWDEISIPDSELLNDPEGEQLCPSLLKLINRCLTKARINSLRCSRLLIPDELLCNLGQELLHLAYSEPCGLRGALIDLCVENGKDCHSVAQITVDQAVVPTFQLTVLLRLDSRLWPRIQGLFSTKPVPGSGQSLKLSPGFKVLKKKLYSSEELIIEEC</sequence>
<reference key="1">
    <citation type="submission" date="2003-06" db="EMBL/GenBank/DDBJ databases">
        <authorList>
            <consortium name="NIH - Xenopus Gene Collection (XGC) project"/>
        </authorList>
    </citation>
    <scope>NUCLEOTIDE SEQUENCE [LARGE SCALE MRNA]</scope>
</reference>
<reference key="2">
    <citation type="journal article" date="2002" name="Mol. Cell">
        <title>REDD1, a developmentally regulated transcriptional target of p63 and p53, links p63 to regulation of reactive oxygen species.</title>
        <authorList>
            <person name="Ellisen L.W."/>
            <person name="Ramsayer K.D."/>
            <person name="Johannessen C.M."/>
            <person name="Yang A."/>
            <person name="Beppu H."/>
            <person name="Minda K."/>
            <person name="Oliner J.D."/>
            <person name="McKeon F."/>
            <person name="Haber D.A."/>
        </authorList>
    </citation>
    <scope>IDENTIFICATION</scope>
</reference>
<dbReference type="EMBL" id="BC054246">
    <property type="protein sequence ID" value="AAH54246.1"/>
    <property type="molecule type" value="mRNA"/>
</dbReference>
<dbReference type="RefSeq" id="NP_001079791.1">
    <property type="nucleotide sequence ID" value="NM_001086322.1"/>
</dbReference>
<dbReference type="SMR" id="Q7SYV9"/>
<dbReference type="DNASU" id="379481"/>
<dbReference type="GeneID" id="379481"/>
<dbReference type="KEGG" id="xla:379481"/>
<dbReference type="AGR" id="Xenbase:XB-GENE-944281"/>
<dbReference type="CTD" id="379481"/>
<dbReference type="Xenbase" id="XB-GENE-944281">
    <property type="gene designation" value="ddit4.S"/>
</dbReference>
<dbReference type="OMA" id="ENGKDCH"/>
<dbReference type="OrthoDB" id="10018535at2759"/>
<dbReference type="Proteomes" id="UP000186698">
    <property type="component" value="Chromosome 7S"/>
</dbReference>
<dbReference type="Bgee" id="379481">
    <property type="expression patterns" value="Expressed in blastula and 19 other cell types or tissues"/>
</dbReference>
<dbReference type="GO" id="GO:0005737">
    <property type="term" value="C:cytoplasm"/>
    <property type="evidence" value="ECO:0000250"/>
    <property type="project" value="UniProtKB"/>
</dbReference>
<dbReference type="GO" id="GO:0005739">
    <property type="term" value="C:mitochondrion"/>
    <property type="evidence" value="ECO:0007669"/>
    <property type="project" value="UniProtKB-SubCell"/>
</dbReference>
<dbReference type="GO" id="GO:0071889">
    <property type="term" value="F:14-3-3 protein binding"/>
    <property type="evidence" value="ECO:0000318"/>
    <property type="project" value="GO_Central"/>
</dbReference>
<dbReference type="GO" id="GO:0006915">
    <property type="term" value="P:apoptotic process"/>
    <property type="evidence" value="ECO:0000318"/>
    <property type="project" value="GO_Central"/>
</dbReference>
<dbReference type="GO" id="GO:0032007">
    <property type="term" value="P:negative regulation of TOR signaling"/>
    <property type="evidence" value="ECO:0000318"/>
    <property type="project" value="GO_Central"/>
</dbReference>
<dbReference type="GO" id="GO:0001666">
    <property type="term" value="P:response to hypoxia"/>
    <property type="evidence" value="ECO:0000318"/>
    <property type="project" value="GO_Central"/>
</dbReference>
<dbReference type="FunFam" id="3.90.470.40:FF:000001">
    <property type="entry name" value="DNA damage-inducible transcript 4 protein"/>
    <property type="match status" value="1"/>
</dbReference>
<dbReference type="Gene3D" id="3.90.470.40">
    <property type="entry name" value="RTP801-like"/>
    <property type="match status" value="1"/>
</dbReference>
<dbReference type="InterPro" id="IPR012918">
    <property type="entry name" value="RTP801-like"/>
</dbReference>
<dbReference type="InterPro" id="IPR038281">
    <property type="entry name" value="RTP801-like_C_sf"/>
</dbReference>
<dbReference type="PANTHER" id="PTHR12478:SF7">
    <property type="entry name" value="DNA DAMAGE-INDUCIBLE TRANSCRIPT 4 PROTEIN"/>
    <property type="match status" value="1"/>
</dbReference>
<dbReference type="PANTHER" id="PTHR12478">
    <property type="entry name" value="DNA-DAMAGE-INDUCIBLE TRANSCRIPT 4 PROTEIN DDIT4"/>
    <property type="match status" value="1"/>
</dbReference>
<dbReference type="Pfam" id="PF07809">
    <property type="entry name" value="RTP801_C"/>
    <property type="match status" value="1"/>
</dbReference>
<gene>
    <name type="primary">ddit4</name>
    <name type="synonym">redd1</name>
</gene>
<protein>
    <recommendedName>
        <fullName>DNA damage-inducible transcript 4 protein</fullName>
    </recommendedName>
    <alternativeName>
        <fullName>Protein regulated in development and DNA damage response 1</fullName>
        <shortName>REDD-1</shortName>
    </alternativeName>
</protein>
<accession>Q7SYV9</accession>
<keyword id="KW-0053">Apoptosis</keyword>
<keyword id="KW-0963">Cytoplasm</keyword>
<keyword id="KW-0496">Mitochondrion</keyword>
<keyword id="KW-1185">Reference proteome</keyword>